<dbReference type="EMBL" id="Z21956">
    <property type="protein sequence ID" value="CAA79966.1"/>
    <property type="molecule type" value="Genomic_DNA"/>
</dbReference>
<dbReference type="PIR" id="S35914">
    <property type="entry name" value="S35914"/>
</dbReference>
<dbReference type="SMR" id="P52676"/>
<dbReference type="CARD" id="ARO:3003665">
    <property type="molecule name" value="NmcR"/>
    <property type="mechanism identifier" value="ARO:0001004"/>
    <property type="mechanism name" value="antibiotic inactivation"/>
</dbReference>
<dbReference type="GO" id="GO:0003700">
    <property type="term" value="F:DNA-binding transcription factor activity"/>
    <property type="evidence" value="ECO:0007669"/>
    <property type="project" value="InterPro"/>
</dbReference>
<dbReference type="GO" id="GO:0043565">
    <property type="term" value="F:sequence-specific DNA binding"/>
    <property type="evidence" value="ECO:0007669"/>
    <property type="project" value="TreeGrafter"/>
</dbReference>
<dbReference type="GO" id="GO:0006351">
    <property type="term" value="P:DNA-templated transcription"/>
    <property type="evidence" value="ECO:0007669"/>
    <property type="project" value="TreeGrafter"/>
</dbReference>
<dbReference type="FunFam" id="1.10.10.10:FF:000038">
    <property type="entry name" value="Glycine cleavage system transcriptional activator"/>
    <property type="match status" value="1"/>
</dbReference>
<dbReference type="Gene3D" id="3.40.190.10">
    <property type="entry name" value="Periplasmic binding protein-like II"/>
    <property type="match status" value="2"/>
</dbReference>
<dbReference type="Gene3D" id="1.10.10.10">
    <property type="entry name" value="Winged helix-like DNA-binding domain superfamily/Winged helix DNA-binding domain"/>
    <property type="match status" value="1"/>
</dbReference>
<dbReference type="InterPro" id="IPR005119">
    <property type="entry name" value="LysR_subst-bd"/>
</dbReference>
<dbReference type="InterPro" id="IPR000847">
    <property type="entry name" value="Tscrpt_reg_HTH_LysR"/>
</dbReference>
<dbReference type="InterPro" id="IPR036388">
    <property type="entry name" value="WH-like_DNA-bd_sf"/>
</dbReference>
<dbReference type="InterPro" id="IPR036390">
    <property type="entry name" value="WH_DNA-bd_sf"/>
</dbReference>
<dbReference type="PANTHER" id="PTHR30537:SF70">
    <property type="entry name" value="HTH-TYPE TRANSCRIPTIONAL ACTIVATOR AMPR"/>
    <property type="match status" value="1"/>
</dbReference>
<dbReference type="PANTHER" id="PTHR30537">
    <property type="entry name" value="HTH-TYPE TRANSCRIPTIONAL REGULATOR"/>
    <property type="match status" value="1"/>
</dbReference>
<dbReference type="Pfam" id="PF00126">
    <property type="entry name" value="HTH_1"/>
    <property type="match status" value="1"/>
</dbReference>
<dbReference type="Pfam" id="PF03466">
    <property type="entry name" value="LysR_substrate"/>
    <property type="match status" value="1"/>
</dbReference>
<dbReference type="PRINTS" id="PR00039">
    <property type="entry name" value="HTHLYSR"/>
</dbReference>
<dbReference type="SUPFAM" id="SSF53850">
    <property type="entry name" value="Periplasmic binding protein-like II"/>
    <property type="match status" value="1"/>
</dbReference>
<dbReference type="SUPFAM" id="SSF46785">
    <property type="entry name" value="Winged helix' DNA-binding domain"/>
    <property type="match status" value="1"/>
</dbReference>
<dbReference type="PROSITE" id="PS50931">
    <property type="entry name" value="HTH_LYSR"/>
    <property type="match status" value="1"/>
</dbReference>
<proteinExistence type="inferred from homology"/>
<sequence>MRARLPLNALRAFEASARYLNFTKAGLELHVSQAAVSQQVRTLEQMLGVALFTRVPRGLQLTDEGMHLLPSITEALQMMSSAMDKFHEGKIKEVLTIAVVGTFAIGWLLPRITAFLNENPWIDIRILTHNNVVNLAAEGIDASIRFGTGGWINTENILLFQAPHTVLCSPETSKKLYIPSDLKKVCLLRSYRKEEWNNWFKAAGIDPWTITGPIFDSTRLMIDAVKLGDYAALVPYHMFQKELNERSVAKPFEIYATLGGYWLTLQKSRVNHNSEALNVFKEWIIEHSREFVLKS</sequence>
<gene>
    <name type="primary">nmcR</name>
</gene>
<name>NMCR_ENTCL</name>
<feature type="chain" id="PRO_0000105692" description="Carbapenem-hydrolyzing beta-lactamase transcriptional activator">
    <location>
        <begin position="1"/>
        <end position="295"/>
    </location>
</feature>
<feature type="domain" description="HTH lysR-type" evidence="1">
    <location>
        <begin position="5"/>
        <end position="62"/>
    </location>
</feature>
<feature type="DNA-binding region" description="H-T-H motif" evidence="1">
    <location>
        <begin position="22"/>
        <end position="41"/>
    </location>
</feature>
<reference key="1">
    <citation type="journal article" date="1994" name="Proc. Natl. Acad. Sci. U.S.A.">
        <title>Analysis of a carbapenem-hydrolyzing class A beta-lactamase from Enterobacter cloacae and of its LysR-type regulatory protein.</title>
        <authorList>
            <person name="Naas T."/>
            <person name="Nordmann P."/>
        </authorList>
    </citation>
    <scope>NUCLEOTIDE SEQUENCE [GENOMIC DNA]</scope>
    <source>
        <strain>NOR-1</strain>
    </source>
</reference>
<evidence type="ECO:0000255" key="1">
    <source>
        <dbReference type="PROSITE-ProRule" id="PRU00253"/>
    </source>
</evidence>
<evidence type="ECO:0000305" key="2"/>
<accession>P52676</accession>
<organism>
    <name type="scientific">Enterobacter cloacae</name>
    <dbReference type="NCBI Taxonomy" id="550"/>
    <lineage>
        <taxon>Bacteria</taxon>
        <taxon>Pseudomonadati</taxon>
        <taxon>Pseudomonadota</taxon>
        <taxon>Gammaproteobacteria</taxon>
        <taxon>Enterobacterales</taxon>
        <taxon>Enterobacteriaceae</taxon>
        <taxon>Enterobacter</taxon>
        <taxon>Enterobacter cloacae complex</taxon>
    </lineage>
</organism>
<protein>
    <recommendedName>
        <fullName>Carbapenem-hydrolyzing beta-lactamase transcriptional activator</fullName>
    </recommendedName>
</protein>
<comment type="function">
    <text>This protein is a positive regulator of gene expression of carbapenem-hydrolyzing beta-lactamase (NmcA).</text>
</comment>
<comment type="similarity">
    <text evidence="2">Belongs to the LysR transcriptional regulatory family.</text>
</comment>
<keyword id="KW-0010">Activator</keyword>
<keyword id="KW-0238">DNA-binding</keyword>
<keyword id="KW-0804">Transcription</keyword>
<keyword id="KW-0805">Transcription regulation</keyword>